<dbReference type="EMBL" id="BX572598">
    <property type="protein sequence ID" value="CAE27226.1"/>
    <property type="molecule type" value="Genomic_DNA"/>
</dbReference>
<dbReference type="RefSeq" id="WP_011157291.1">
    <property type="nucleotide sequence ID" value="NZ_CP116810.1"/>
</dbReference>
<dbReference type="PDB" id="3C5O">
    <property type="method" value="X-ray"/>
    <property type="resolution" value="2.20 A"/>
    <property type="chains" value="A/B/C/D=1-153"/>
</dbReference>
<dbReference type="PDBsum" id="3C5O"/>
<dbReference type="SMR" id="P61167"/>
<dbReference type="STRING" id="258594.RPA1785"/>
<dbReference type="GeneID" id="66892820"/>
<dbReference type="eggNOG" id="ENOG5032SS8">
    <property type="taxonomic scope" value="Bacteria"/>
</dbReference>
<dbReference type="HOGENOM" id="CLU_096872_4_3_5"/>
<dbReference type="PhylomeDB" id="P61167"/>
<dbReference type="EvolutionaryTrace" id="P61167"/>
<dbReference type="Gene3D" id="2.40.160.20">
    <property type="match status" value="1"/>
</dbReference>
<dbReference type="HAMAP" id="MF_00775">
    <property type="entry name" value="UPF0311"/>
    <property type="match status" value="1"/>
</dbReference>
<dbReference type="InterPro" id="IPR020915">
    <property type="entry name" value="UPF0311"/>
</dbReference>
<dbReference type="NCBIfam" id="NF002045">
    <property type="entry name" value="PRK00872.1-1"/>
    <property type="match status" value="1"/>
</dbReference>
<dbReference type="PANTHER" id="PTHR37315">
    <property type="entry name" value="UPF0311 PROTEIN BLR7842"/>
    <property type="match status" value="1"/>
</dbReference>
<dbReference type="PANTHER" id="PTHR37315:SF1">
    <property type="entry name" value="UPF0311 PROTEIN BLR7842"/>
    <property type="match status" value="1"/>
</dbReference>
<dbReference type="Pfam" id="PF11578">
    <property type="entry name" value="DUF3237"/>
    <property type="match status" value="1"/>
</dbReference>
<organism>
    <name type="scientific">Rhodopseudomonas palustris (strain ATCC BAA-98 / CGA009)</name>
    <dbReference type="NCBI Taxonomy" id="258594"/>
    <lineage>
        <taxon>Bacteria</taxon>
        <taxon>Pseudomonadati</taxon>
        <taxon>Pseudomonadota</taxon>
        <taxon>Alphaproteobacteria</taxon>
        <taxon>Hyphomicrobiales</taxon>
        <taxon>Nitrobacteraceae</taxon>
        <taxon>Rhodopseudomonas</taxon>
    </lineage>
</organism>
<protein>
    <recommendedName>
        <fullName evidence="1">UPF0311 protein RPA1785</fullName>
    </recommendedName>
</protein>
<keyword id="KW-0002">3D-structure</keyword>
<name>Y1785_RHOPA</name>
<comment type="similarity">
    <text evidence="1">Belongs to the UPF0311 family.</text>
</comment>
<accession>P61167</accession>
<reference key="1">
    <citation type="journal article" date="2004" name="Nat. Biotechnol.">
        <title>Complete genome sequence of the metabolically versatile photosynthetic bacterium Rhodopseudomonas palustris.</title>
        <authorList>
            <person name="Larimer F.W."/>
            <person name="Chain P."/>
            <person name="Hauser L."/>
            <person name="Lamerdin J.E."/>
            <person name="Malfatti S."/>
            <person name="Do L."/>
            <person name="Land M.L."/>
            <person name="Pelletier D.A."/>
            <person name="Beatty J.T."/>
            <person name="Lang A.S."/>
            <person name="Tabita F.R."/>
            <person name="Gibson J.L."/>
            <person name="Hanson T.E."/>
            <person name="Bobst C."/>
            <person name="Torres y Torres J.L."/>
            <person name="Peres C."/>
            <person name="Harrison F.H."/>
            <person name="Gibson J."/>
            <person name="Harwood C.S."/>
        </authorList>
    </citation>
    <scope>NUCLEOTIDE SEQUENCE [LARGE SCALE GENOMIC DNA]</scope>
    <source>
        <strain>ATCC BAA-98 / CGA009</strain>
    </source>
</reference>
<gene>
    <name type="ordered locus">RPA1785</name>
</gene>
<evidence type="ECO:0000255" key="1">
    <source>
        <dbReference type="HAMAP-Rule" id="MF_00775"/>
    </source>
</evidence>
<evidence type="ECO:0007829" key="2">
    <source>
        <dbReference type="PDB" id="3C5O"/>
    </source>
</evidence>
<sequence length="153" mass="17116">MTPTLETKYVFTITARIGDVTSAGEIGTGVRRIIPILGGEVKGEGISGQVLPFGADFQIIRPNELIELEAKYAFETDDGAVVYVENVGIRFGPVELLRKLKRGEPVDPKVIYFRTRPRFETGHPNYQWLMQYLFVGSAARHADRVVIDVHQVL</sequence>
<feature type="chain" id="PRO_0000108124" description="UPF0311 protein RPA1785">
    <location>
        <begin position="1"/>
        <end position="153"/>
    </location>
</feature>
<feature type="strand" evidence="2">
    <location>
        <begin position="7"/>
        <end position="17"/>
    </location>
</feature>
<feature type="strand" evidence="2">
    <location>
        <begin position="21"/>
        <end position="25"/>
    </location>
</feature>
<feature type="strand" evidence="2">
    <location>
        <begin position="27"/>
        <end position="43"/>
    </location>
</feature>
<feature type="strand" evidence="2">
    <location>
        <begin position="46"/>
        <end position="50"/>
    </location>
</feature>
<feature type="strand" evidence="2">
    <location>
        <begin position="55"/>
        <end position="60"/>
    </location>
</feature>
<feature type="strand" evidence="2">
    <location>
        <begin position="66"/>
        <end position="76"/>
    </location>
</feature>
<feature type="strand" evidence="2">
    <location>
        <begin position="81"/>
        <end position="91"/>
    </location>
</feature>
<feature type="helix" evidence="2">
    <location>
        <begin position="94"/>
        <end position="98"/>
    </location>
</feature>
<feature type="strand" evidence="2">
    <location>
        <begin position="110"/>
        <end position="120"/>
    </location>
</feature>
<feature type="helix" evidence="2">
    <location>
        <begin position="124"/>
        <end position="130"/>
    </location>
</feature>
<feature type="strand" evidence="2">
    <location>
        <begin position="134"/>
        <end position="140"/>
    </location>
</feature>
<feature type="strand" evidence="2">
    <location>
        <begin position="142"/>
        <end position="152"/>
    </location>
</feature>
<proteinExistence type="evidence at protein level"/>